<name>RPOB_AERHH</name>
<accession>A0KQA5</accession>
<proteinExistence type="inferred from homology"/>
<gene>
    <name evidence="1" type="primary">rpoB</name>
    <name type="ordered locus">AHA_4028</name>
</gene>
<sequence>MVYSYTEKKRIRKDFGKRDQVLDTPYLLSIQLDSFKQFIEADPEGEYGLEAAFRSVFPITSYSGSAELQYVSYRLGEPVFDVKECQIRGVTYSAPLRVKLRMVLYDREAAAGTVKDIKEQEVYMGEIPLMTENGTFVINGTERVIVSQLHRSPGVFFDHDKGKTHSSGKVLYNARVIPYRGSWLDFEFDAKDNLFVRIDRRRKLPASIILRALDFSSEQILATFFETIGFEVKDGKLMMDLVPERLRGETATFDIVANGAVVVETGRRVTARHIRQLEKDSVTQIEVPVEYVVGKVAAKDYAHPQTGEMVVTANQALSLEAVANLSQAGFKHFEVLFTNELDHGAYMSETLRIDSSSSRLEALVEIYRMMRPGEPPTREAAEQLFENLFFSSERYDLSTVGRMKFNRRLAREDETGVGTLTKDDIVDVMKRLIDIRNGNDEVDDIDHLGNRRIRSVGEMAENQFRVGLVRVERAVKERLSLGDLDTLMPQDLINAKPISAAVKEFFGSSQLSQFMDQNNPLSEVTHKRRISALGPGGLTRERAGFEVRDVHPTHYGRLCPIETPEGPNIGLINSLSVYSRTNEYGFLETPYRKVIDGVITDEVDYLSAIEEGKYVIAQANAATTEDGRLKDELIPCRHKGESTFMNADQIQYMDVSPQQIVSVAAALIPFLEHDDANRALMGSNMQRQAVPTLRADKPLVGTGMERAVAVDSGVTVVAKRGGMIDYVDASRIVIKVNEDELLPGEAGIDIYSLTKYTRSNQNTCINQRPCVMLGEPVMAGDVLADGPSTDLGELALGQNLRVAFMPWNGYNFEDSILVNERVVQEDRLTTIHIQELACISRDTKLGPEEITADIPNVGEAALSKLDESGIVYVGAEVKGGDILVGKVTPKGETQLTPEEKLLRAIFGEKASDVKDSSLRVPNGVYGTVVDVQVFTRDGVEKDKRAKEIEEMQLKEAKKDLTEEFKILEDGIFGRSRNLLLAAGYSEDRLNKLDRSKWFELAIEDEAKQIELEQIAEQHVELKAEFDKKFENKRRKIIQGDDLAPGVLKIVKVYLAVKRRIQPGDKMAGRHGNKGVISKICPVEDMPHDEYGRPVDIVLNPLGVPSRMNIGQILEVHLGLAAKGIGEKIDRMVKEQRELHEMRDFLQQVYDLGEKDTQQVNVAELSDDDVRTLVGNLRKGLPVATPVFDGAKEREIKALLKLADLPESGQIALFDGRTGNAFERKVTVGYMYMLKLNHLVDDKMHARSTGSYSLVTQQPLGGKAQFGGQRFGEMEVWALEAYGAAYTLQEMLTVKSDDVNGRTKMYKNIVDGDHRMEPGMPESFNVLLKEIRSLGINIELDEE</sequence>
<feature type="chain" id="PRO_0000300273" description="DNA-directed RNA polymerase subunit beta">
    <location>
        <begin position="1"/>
        <end position="1342"/>
    </location>
</feature>
<keyword id="KW-0240">DNA-directed RNA polymerase</keyword>
<keyword id="KW-0548">Nucleotidyltransferase</keyword>
<keyword id="KW-1185">Reference proteome</keyword>
<keyword id="KW-0804">Transcription</keyword>
<keyword id="KW-0808">Transferase</keyword>
<dbReference type="EC" id="2.7.7.6" evidence="1"/>
<dbReference type="EMBL" id="CP000462">
    <property type="protein sequence ID" value="ABK39764.1"/>
    <property type="status" value="ALT_INIT"/>
    <property type="molecule type" value="Genomic_DNA"/>
</dbReference>
<dbReference type="RefSeq" id="WP_010635847.1">
    <property type="nucleotide sequence ID" value="NC_008570.1"/>
</dbReference>
<dbReference type="RefSeq" id="YP_858456.1">
    <property type="nucleotide sequence ID" value="NC_008570.1"/>
</dbReference>
<dbReference type="SMR" id="A0KQA5"/>
<dbReference type="STRING" id="380703.AHA_4028"/>
<dbReference type="EnsemblBacteria" id="ABK39764">
    <property type="protein sequence ID" value="ABK39764"/>
    <property type="gene ID" value="AHA_4028"/>
</dbReference>
<dbReference type="GeneID" id="47843005"/>
<dbReference type="KEGG" id="aha:AHA_4028"/>
<dbReference type="PATRIC" id="fig|380703.7.peg.3988"/>
<dbReference type="eggNOG" id="COG0085">
    <property type="taxonomic scope" value="Bacteria"/>
</dbReference>
<dbReference type="HOGENOM" id="CLU_000524_4_3_6"/>
<dbReference type="OrthoDB" id="9803954at2"/>
<dbReference type="Proteomes" id="UP000000756">
    <property type="component" value="Chromosome"/>
</dbReference>
<dbReference type="GO" id="GO:0000428">
    <property type="term" value="C:DNA-directed RNA polymerase complex"/>
    <property type="evidence" value="ECO:0007669"/>
    <property type="project" value="UniProtKB-KW"/>
</dbReference>
<dbReference type="GO" id="GO:0003677">
    <property type="term" value="F:DNA binding"/>
    <property type="evidence" value="ECO:0007669"/>
    <property type="project" value="UniProtKB-UniRule"/>
</dbReference>
<dbReference type="GO" id="GO:0003899">
    <property type="term" value="F:DNA-directed RNA polymerase activity"/>
    <property type="evidence" value="ECO:0007669"/>
    <property type="project" value="UniProtKB-UniRule"/>
</dbReference>
<dbReference type="GO" id="GO:0032549">
    <property type="term" value="F:ribonucleoside binding"/>
    <property type="evidence" value="ECO:0007669"/>
    <property type="project" value="InterPro"/>
</dbReference>
<dbReference type="GO" id="GO:0006351">
    <property type="term" value="P:DNA-templated transcription"/>
    <property type="evidence" value="ECO:0007669"/>
    <property type="project" value="UniProtKB-UniRule"/>
</dbReference>
<dbReference type="CDD" id="cd00653">
    <property type="entry name" value="RNA_pol_B_RPB2"/>
    <property type="match status" value="1"/>
</dbReference>
<dbReference type="FunFam" id="2.40.270.10:FF:000004">
    <property type="entry name" value="DNA-directed RNA polymerase subunit beta"/>
    <property type="match status" value="1"/>
</dbReference>
<dbReference type="FunFam" id="2.40.50.100:FF:000006">
    <property type="entry name" value="DNA-directed RNA polymerase subunit beta"/>
    <property type="match status" value="1"/>
</dbReference>
<dbReference type="FunFam" id="2.40.50.150:FF:000001">
    <property type="entry name" value="DNA-directed RNA polymerase subunit beta"/>
    <property type="match status" value="1"/>
</dbReference>
<dbReference type="FunFam" id="3.90.1100.10:FF:000002">
    <property type="entry name" value="DNA-directed RNA polymerase subunit beta"/>
    <property type="match status" value="1"/>
</dbReference>
<dbReference type="FunFam" id="3.90.1110.10:FF:000001">
    <property type="entry name" value="DNA-directed RNA polymerase subunit beta"/>
    <property type="match status" value="1"/>
</dbReference>
<dbReference type="FunFam" id="3.90.1110.10:FF:000004">
    <property type="entry name" value="DNA-directed RNA polymerase subunit beta"/>
    <property type="match status" value="1"/>
</dbReference>
<dbReference type="FunFam" id="3.90.1800.10:FF:000001">
    <property type="entry name" value="DNA-directed RNA polymerase subunit beta"/>
    <property type="match status" value="1"/>
</dbReference>
<dbReference type="Gene3D" id="2.40.50.100">
    <property type="match status" value="1"/>
</dbReference>
<dbReference type="Gene3D" id="2.40.50.150">
    <property type="match status" value="1"/>
</dbReference>
<dbReference type="Gene3D" id="3.90.1100.10">
    <property type="match status" value="2"/>
</dbReference>
<dbReference type="Gene3D" id="6.10.140.1670">
    <property type="match status" value="1"/>
</dbReference>
<dbReference type="Gene3D" id="2.30.150.10">
    <property type="entry name" value="DNA-directed RNA polymerase, beta subunit, external 1 domain"/>
    <property type="match status" value="1"/>
</dbReference>
<dbReference type="Gene3D" id="2.40.270.10">
    <property type="entry name" value="DNA-directed RNA polymerase, subunit 2, domain 6"/>
    <property type="match status" value="1"/>
</dbReference>
<dbReference type="Gene3D" id="3.90.1800.10">
    <property type="entry name" value="RNA polymerase alpha subunit dimerisation domain"/>
    <property type="match status" value="1"/>
</dbReference>
<dbReference type="Gene3D" id="3.90.1110.10">
    <property type="entry name" value="RNA polymerase Rpb2, domain 2"/>
    <property type="match status" value="1"/>
</dbReference>
<dbReference type="HAMAP" id="MF_01321">
    <property type="entry name" value="RNApol_bact_RpoB"/>
    <property type="match status" value="1"/>
</dbReference>
<dbReference type="InterPro" id="IPR042107">
    <property type="entry name" value="DNA-dir_RNA_pol_bsu_ext_1_sf"/>
</dbReference>
<dbReference type="InterPro" id="IPR019462">
    <property type="entry name" value="DNA-dir_RNA_pol_bsu_external_1"/>
</dbReference>
<dbReference type="InterPro" id="IPR015712">
    <property type="entry name" value="DNA-dir_RNA_pol_su2"/>
</dbReference>
<dbReference type="InterPro" id="IPR007120">
    <property type="entry name" value="DNA-dir_RNAP_su2_dom"/>
</dbReference>
<dbReference type="InterPro" id="IPR037033">
    <property type="entry name" value="DNA-dir_RNAP_su2_hyb_sf"/>
</dbReference>
<dbReference type="InterPro" id="IPR010243">
    <property type="entry name" value="RNA_pol_bsu_bac"/>
</dbReference>
<dbReference type="InterPro" id="IPR007121">
    <property type="entry name" value="RNA_pol_bsu_CS"/>
</dbReference>
<dbReference type="InterPro" id="IPR007644">
    <property type="entry name" value="RNA_pol_bsu_protrusion"/>
</dbReference>
<dbReference type="InterPro" id="IPR007642">
    <property type="entry name" value="RNA_pol_Rpb2_2"/>
</dbReference>
<dbReference type="InterPro" id="IPR037034">
    <property type="entry name" value="RNA_pol_Rpb2_2_sf"/>
</dbReference>
<dbReference type="InterPro" id="IPR007645">
    <property type="entry name" value="RNA_pol_Rpb2_3"/>
</dbReference>
<dbReference type="InterPro" id="IPR007641">
    <property type="entry name" value="RNA_pol_Rpb2_7"/>
</dbReference>
<dbReference type="InterPro" id="IPR014724">
    <property type="entry name" value="RNA_pol_RPB2_OB-fold"/>
</dbReference>
<dbReference type="NCBIfam" id="NF001616">
    <property type="entry name" value="PRK00405.1"/>
    <property type="match status" value="1"/>
</dbReference>
<dbReference type="NCBIfam" id="TIGR02013">
    <property type="entry name" value="rpoB"/>
    <property type="match status" value="1"/>
</dbReference>
<dbReference type="PANTHER" id="PTHR20856">
    <property type="entry name" value="DNA-DIRECTED RNA POLYMERASE I SUBUNIT 2"/>
    <property type="match status" value="1"/>
</dbReference>
<dbReference type="Pfam" id="PF04563">
    <property type="entry name" value="RNA_pol_Rpb2_1"/>
    <property type="match status" value="1"/>
</dbReference>
<dbReference type="Pfam" id="PF04561">
    <property type="entry name" value="RNA_pol_Rpb2_2"/>
    <property type="match status" value="2"/>
</dbReference>
<dbReference type="Pfam" id="PF04565">
    <property type="entry name" value="RNA_pol_Rpb2_3"/>
    <property type="match status" value="1"/>
</dbReference>
<dbReference type="Pfam" id="PF10385">
    <property type="entry name" value="RNA_pol_Rpb2_45"/>
    <property type="match status" value="1"/>
</dbReference>
<dbReference type="Pfam" id="PF00562">
    <property type="entry name" value="RNA_pol_Rpb2_6"/>
    <property type="match status" value="1"/>
</dbReference>
<dbReference type="Pfam" id="PF04560">
    <property type="entry name" value="RNA_pol_Rpb2_7"/>
    <property type="match status" value="1"/>
</dbReference>
<dbReference type="SUPFAM" id="SSF64484">
    <property type="entry name" value="beta and beta-prime subunits of DNA dependent RNA-polymerase"/>
    <property type="match status" value="1"/>
</dbReference>
<dbReference type="PROSITE" id="PS01166">
    <property type="entry name" value="RNA_POL_BETA"/>
    <property type="match status" value="1"/>
</dbReference>
<organism>
    <name type="scientific">Aeromonas hydrophila subsp. hydrophila (strain ATCC 7966 / DSM 30187 / BCRC 13018 / CCUG 14551 / JCM 1027 / KCTC 2358 / NCIMB 9240 / NCTC 8049)</name>
    <dbReference type="NCBI Taxonomy" id="380703"/>
    <lineage>
        <taxon>Bacteria</taxon>
        <taxon>Pseudomonadati</taxon>
        <taxon>Pseudomonadota</taxon>
        <taxon>Gammaproteobacteria</taxon>
        <taxon>Aeromonadales</taxon>
        <taxon>Aeromonadaceae</taxon>
        <taxon>Aeromonas</taxon>
    </lineage>
</organism>
<protein>
    <recommendedName>
        <fullName evidence="1">DNA-directed RNA polymerase subunit beta</fullName>
        <shortName evidence="1">RNAP subunit beta</shortName>
        <ecNumber evidence="1">2.7.7.6</ecNumber>
    </recommendedName>
    <alternativeName>
        <fullName evidence="1">RNA polymerase subunit beta</fullName>
    </alternativeName>
    <alternativeName>
        <fullName evidence="1">Transcriptase subunit beta</fullName>
    </alternativeName>
</protein>
<reference key="1">
    <citation type="journal article" date="2006" name="J. Bacteriol.">
        <title>Genome sequence of Aeromonas hydrophila ATCC 7966T: jack of all trades.</title>
        <authorList>
            <person name="Seshadri R."/>
            <person name="Joseph S.W."/>
            <person name="Chopra A.K."/>
            <person name="Sha J."/>
            <person name="Shaw J."/>
            <person name="Graf J."/>
            <person name="Haft D.H."/>
            <person name="Wu M."/>
            <person name="Ren Q."/>
            <person name="Rosovitz M.J."/>
            <person name="Madupu R."/>
            <person name="Tallon L."/>
            <person name="Kim M."/>
            <person name="Jin S."/>
            <person name="Vuong H."/>
            <person name="Stine O.C."/>
            <person name="Ali A."/>
            <person name="Horneman A.J."/>
            <person name="Heidelberg J.F."/>
        </authorList>
    </citation>
    <scope>NUCLEOTIDE SEQUENCE [LARGE SCALE GENOMIC DNA]</scope>
    <source>
        <strain>ATCC 7966 / DSM 30187 / BCRC 13018 / CCUG 14551 / JCM 1027 / KCTC 2358 / NCIMB 9240 / NCTC 8049</strain>
    </source>
</reference>
<comment type="function">
    <text evidence="1">DNA-dependent RNA polymerase catalyzes the transcription of DNA into RNA using the four ribonucleoside triphosphates as substrates.</text>
</comment>
<comment type="catalytic activity">
    <reaction evidence="1">
        <text>RNA(n) + a ribonucleoside 5'-triphosphate = RNA(n+1) + diphosphate</text>
        <dbReference type="Rhea" id="RHEA:21248"/>
        <dbReference type="Rhea" id="RHEA-COMP:14527"/>
        <dbReference type="Rhea" id="RHEA-COMP:17342"/>
        <dbReference type="ChEBI" id="CHEBI:33019"/>
        <dbReference type="ChEBI" id="CHEBI:61557"/>
        <dbReference type="ChEBI" id="CHEBI:140395"/>
        <dbReference type="EC" id="2.7.7.6"/>
    </reaction>
</comment>
<comment type="subunit">
    <text evidence="1">The RNAP catalytic core consists of 2 alpha, 1 beta, 1 beta' and 1 omega subunit. When a sigma factor is associated with the core the holoenzyme is formed, which can initiate transcription.</text>
</comment>
<comment type="similarity">
    <text evidence="1">Belongs to the RNA polymerase beta chain family.</text>
</comment>
<comment type="sequence caution" evidence="2">
    <conflict type="erroneous initiation">
        <sequence resource="EMBL-CDS" id="ABK39764"/>
    </conflict>
</comment>
<evidence type="ECO:0000255" key="1">
    <source>
        <dbReference type="HAMAP-Rule" id="MF_01321"/>
    </source>
</evidence>
<evidence type="ECO:0000305" key="2"/>